<organism>
    <name type="scientific">Acidithiobacillus ferrooxidans (strain ATCC 53993 / BNL-5-31)</name>
    <name type="common">Leptospirillum ferrooxidans (ATCC 53993)</name>
    <dbReference type="NCBI Taxonomy" id="380394"/>
    <lineage>
        <taxon>Bacteria</taxon>
        <taxon>Pseudomonadati</taxon>
        <taxon>Pseudomonadota</taxon>
        <taxon>Acidithiobacillia</taxon>
        <taxon>Acidithiobacillales</taxon>
        <taxon>Acidithiobacillaceae</taxon>
        <taxon>Acidithiobacillus</taxon>
    </lineage>
</organism>
<proteinExistence type="inferred from homology"/>
<dbReference type="EMBL" id="CP001132">
    <property type="protein sequence ID" value="ACH83591.1"/>
    <property type="molecule type" value="Genomic_DNA"/>
</dbReference>
<dbReference type="RefSeq" id="WP_012536676.1">
    <property type="nucleotide sequence ID" value="NC_011206.1"/>
</dbReference>
<dbReference type="KEGG" id="afe:Lferr_1358"/>
<dbReference type="eggNOG" id="COG3002">
    <property type="taxonomic scope" value="Bacteria"/>
</dbReference>
<dbReference type="HOGENOM" id="CLU_009885_1_0_6"/>
<dbReference type="GO" id="GO:0005886">
    <property type="term" value="C:plasma membrane"/>
    <property type="evidence" value="ECO:0007669"/>
    <property type="project" value="UniProtKB-SubCell"/>
</dbReference>
<dbReference type="GO" id="GO:0008270">
    <property type="term" value="F:zinc ion binding"/>
    <property type="evidence" value="ECO:0007669"/>
    <property type="project" value="UniProtKB-UniRule"/>
</dbReference>
<dbReference type="HAMAP" id="MF_01871">
    <property type="entry name" value="DabA"/>
    <property type="match status" value="1"/>
</dbReference>
<dbReference type="InterPro" id="IPR018752">
    <property type="entry name" value="DabA"/>
</dbReference>
<dbReference type="PANTHER" id="PTHR38344:SF1">
    <property type="entry name" value="INORGANIC CARBON TRANSPORTER SUBUNIT DABA-RELATED"/>
    <property type="match status" value="1"/>
</dbReference>
<dbReference type="PANTHER" id="PTHR38344">
    <property type="entry name" value="UPF0753 PROTEIN AQ_863"/>
    <property type="match status" value="1"/>
</dbReference>
<dbReference type="Pfam" id="PF10070">
    <property type="entry name" value="DabA"/>
    <property type="match status" value="1"/>
</dbReference>
<keyword id="KW-0997">Cell inner membrane</keyword>
<keyword id="KW-1003">Cell membrane</keyword>
<keyword id="KW-0472">Membrane</keyword>
<keyword id="KW-0479">Metal-binding</keyword>
<keyword id="KW-0813">Transport</keyword>
<keyword id="KW-0862">Zinc</keyword>
<comment type="function">
    <text evidence="1">Part of an energy-coupled inorganic carbon pump.</text>
</comment>
<comment type="cofactor">
    <cofactor evidence="1">
        <name>Zn(2+)</name>
        <dbReference type="ChEBI" id="CHEBI:29105"/>
    </cofactor>
</comment>
<comment type="subunit">
    <text evidence="1">Forms a complex with DabB.</text>
</comment>
<comment type="subcellular location">
    <subcellularLocation>
        <location evidence="1">Cell inner membrane</location>
        <topology evidence="1">Peripheral membrane protein</topology>
    </subcellularLocation>
</comment>
<comment type="similarity">
    <text evidence="1">Belongs to the inorganic carbon transporter (TC 9.A.2) DabA family.</text>
</comment>
<protein>
    <recommendedName>
        <fullName evidence="1">Probable inorganic carbon transporter subunit DabA</fullName>
    </recommendedName>
</protein>
<sequence length="825" mass="92340">MQTPATIKSYQDIKANIEKACQRIAPLWPLKHFVAVNPYVGLRDQPFWRADQTLRKITGKGLTMPRPYYEEQIANGRITQEDLDEALKEMHSNWSVTQLKQAMKQRSASRNVPFPVFADAMFADDRRDWPGFVVERISQYCAAYFDEGQATWSMPWRDDPMYQAWLKFMHFDKSPRMVGLRGIGEAAAALPAAAETAIALALKELSVPFDLIDDYLFAALLSIGGWAGWARYLRWQAELKGETDQSLRDLLAIRVCWDAILHKTCADIAVRKQWHLMLHTQQNRAIEKPSEHVDAILQTALEIGYQRSLIKSLKEASRPSNTVIERPVAQAAFCIDVRSEIIRRALETVAPGIQTLGFAGFFGVLMEYVPFGSNAPKGHLPVIFNPPYRVCEDLSHASEDETQRHAAKRQLRLRVATAWKSFKTSAVSTFTFVEATGLLYAPKLFGDSMGWTRTVPHPDERGLDSGTKQRLRPRLIASGNGKSSAKSTGIPETERAGVGEFILKNMGLTQTFARLILLAGHGSTTVNNPQGTGLDCGACAGQTGEASARIAVTLLNDPATRRGLEEKGLKIPKDTYFIAGLHDTTTDEVTIFDTEDLPTTHAKDLAQLRQWLADAGELTRLERATLLGTASQAPEVVTRDMRRRTRDWAEVRPEWALAGNAAFIAAPRQRTRGVDLEGRAFLHDYDWHKDAGFSTLELIMTAPMVVANWINMQYYGSMVDNLRFGSGNKVLHNVVGGSIGVLEGNGGDLRVGFALQSLHDGKRWIHEPVRLNVVIEAPQAEMESIISRHILVRELVDNGWLYLFQIDDDGSVYRRVCDKQWPRMT</sequence>
<evidence type="ECO:0000255" key="1">
    <source>
        <dbReference type="HAMAP-Rule" id="MF_01871"/>
    </source>
</evidence>
<gene>
    <name evidence="1" type="primary">dabA</name>
    <name type="ordered locus">Lferr_1358</name>
</gene>
<accession>B5ERS0</accession>
<feature type="chain" id="PRO_0000387228" description="Probable inorganic carbon transporter subunit DabA">
    <location>
        <begin position="1"/>
        <end position="825"/>
    </location>
</feature>
<feature type="binding site" evidence="1">
    <location>
        <position position="334"/>
    </location>
    <ligand>
        <name>Zn(2+)</name>
        <dbReference type="ChEBI" id="CHEBI:29105"/>
    </ligand>
</feature>
<feature type="binding site" evidence="1">
    <location>
        <position position="336"/>
    </location>
    <ligand>
        <name>Zn(2+)</name>
        <dbReference type="ChEBI" id="CHEBI:29105"/>
    </ligand>
</feature>
<feature type="binding site" evidence="1">
    <location>
        <position position="521"/>
    </location>
    <ligand>
        <name>Zn(2+)</name>
        <dbReference type="ChEBI" id="CHEBI:29105"/>
    </ligand>
</feature>
<feature type="binding site" evidence="1">
    <location>
        <position position="536"/>
    </location>
    <ligand>
        <name>Zn(2+)</name>
        <dbReference type="ChEBI" id="CHEBI:29105"/>
    </ligand>
</feature>
<name>DABA_ACIF5</name>
<reference key="1">
    <citation type="submission" date="2008-08" db="EMBL/GenBank/DDBJ databases">
        <title>Complete sequence of Acidithiobacillus ferrooxidans ATCC 53993.</title>
        <authorList>
            <person name="Lucas S."/>
            <person name="Copeland A."/>
            <person name="Lapidus A."/>
            <person name="Glavina del Rio T."/>
            <person name="Dalin E."/>
            <person name="Tice H."/>
            <person name="Bruce D."/>
            <person name="Goodwin L."/>
            <person name="Pitluck S."/>
            <person name="Sims D."/>
            <person name="Brettin T."/>
            <person name="Detter J.C."/>
            <person name="Han C."/>
            <person name="Kuske C.R."/>
            <person name="Larimer F."/>
            <person name="Land M."/>
            <person name="Hauser L."/>
            <person name="Kyrpides N."/>
            <person name="Lykidis A."/>
            <person name="Borole A.P."/>
        </authorList>
    </citation>
    <scope>NUCLEOTIDE SEQUENCE [LARGE SCALE GENOMIC DNA]</scope>
    <source>
        <strain>ATCC 53993 / BNL-5-31</strain>
    </source>
</reference>